<evidence type="ECO:0000255" key="1">
    <source>
        <dbReference type="HAMAP-Rule" id="MF_01569"/>
    </source>
</evidence>
<evidence type="ECO:0000256" key="2">
    <source>
        <dbReference type="SAM" id="MobiDB-lite"/>
    </source>
</evidence>
<organism>
    <name type="scientific">Geobacter sulfurreducens (strain ATCC 51573 / DSM 12127 / PCA)</name>
    <dbReference type="NCBI Taxonomy" id="243231"/>
    <lineage>
        <taxon>Bacteria</taxon>
        <taxon>Pseudomonadati</taxon>
        <taxon>Thermodesulfobacteriota</taxon>
        <taxon>Desulfuromonadia</taxon>
        <taxon>Geobacterales</taxon>
        <taxon>Geobacteraceae</taxon>
        <taxon>Geobacter</taxon>
    </lineage>
</organism>
<sequence>MRYTNYFIPTLKETPSDAEVVSHQLMLRAGMIRKLAAGIYNYLPLGLRSIRKVETIVREEMDRAGAIELLMPSVQPAELWQESTRWEQYGKELLRFKDRKDAEFCLGPTHEEVVTDIVRREVKSYRQMPFNLYQIQAKFRDEIRPRFGLMRGREFIMKDAYSFDVDSSASDLSYDKMYQAYRRIFQRCGLKFRAVEADTGSIGGSSSHEFMVLADSGEDAIVSCTQCEYAANVEKAEARPAPAEHAEPRPLEKVETPAKRSVEEVTAFLGIPSSALVKTLLVVADGTPVAALVRGDHDLNEIKLKHLLGCETLEMANEEMVTRVTGAPVGFAGPVGLNIKIVADLAVQGMKNFVTGANAGDLHLKNVTIGRDFTPTQYADIRNVVHGDPCPRCEAGHLELWRGIEVGHVFKLGTKYSEALRATYLDADGKEQIIFMGCYGIGISRTVAACIEQNHDADGIIFPIPIAPFHCIVSAVNTKDAEVMAACESLYLDLRAAGVEVLFDDRDERPGIKFKDADLIGIPLRLVVGSKNLADGKVELKSRRTGEVELLPLAGAVEKVRNIVAEALGR</sequence>
<reference key="1">
    <citation type="journal article" date="2003" name="Science">
        <title>Genome of Geobacter sulfurreducens: metal reduction in subsurface environments.</title>
        <authorList>
            <person name="Methe B.A."/>
            <person name="Nelson K.E."/>
            <person name="Eisen J.A."/>
            <person name="Paulsen I.T."/>
            <person name="Nelson W.C."/>
            <person name="Heidelberg J.F."/>
            <person name="Wu D."/>
            <person name="Wu M."/>
            <person name="Ward N.L."/>
            <person name="Beanan M.J."/>
            <person name="Dodson R.J."/>
            <person name="Madupu R."/>
            <person name="Brinkac L.M."/>
            <person name="Daugherty S.C."/>
            <person name="DeBoy R.T."/>
            <person name="Durkin A.S."/>
            <person name="Gwinn M.L."/>
            <person name="Kolonay J.F."/>
            <person name="Sullivan S.A."/>
            <person name="Haft D.H."/>
            <person name="Selengut J."/>
            <person name="Davidsen T.M."/>
            <person name="Zafar N."/>
            <person name="White O."/>
            <person name="Tran B."/>
            <person name="Romero C."/>
            <person name="Forberger H.A."/>
            <person name="Weidman J.F."/>
            <person name="Khouri H.M."/>
            <person name="Feldblyum T.V."/>
            <person name="Utterback T.R."/>
            <person name="Van Aken S.E."/>
            <person name="Lovley D.R."/>
            <person name="Fraser C.M."/>
        </authorList>
    </citation>
    <scope>NUCLEOTIDE SEQUENCE [LARGE SCALE GENOMIC DNA]</scope>
    <source>
        <strain>ATCC 51573 / DSM 12127 / PCA</strain>
    </source>
</reference>
<feature type="chain" id="PRO_0000248698" description="Proline--tRNA ligase">
    <location>
        <begin position="1"/>
        <end position="570"/>
    </location>
</feature>
<feature type="region of interest" description="Disordered" evidence="2">
    <location>
        <begin position="238"/>
        <end position="257"/>
    </location>
</feature>
<accession>Q74D59</accession>
<name>SYP_GEOSL</name>
<comment type="function">
    <text evidence="1">Catalyzes the attachment of proline to tRNA(Pro) in a two-step reaction: proline is first activated by ATP to form Pro-AMP and then transferred to the acceptor end of tRNA(Pro). As ProRS can inadvertently accommodate and process non-cognate amino acids such as alanine and cysteine, to avoid such errors it has two additional distinct editing activities against alanine. One activity is designated as 'pretransfer' editing and involves the tRNA(Pro)-independent hydrolysis of activated Ala-AMP. The other activity is designated 'posttransfer' editing and involves deacylation of mischarged Ala-tRNA(Pro). The misacylated Cys-tRNA(Pro) is not edited by ProRS.</text>
</comment>
<comment type="catalytic activity">
    <reaction evidence="1">
        <text>tRNA(Pro) + L-proline + ATP = L-prolyl-tRNA(Pro) + AMP + diphosphate</text>
        <dbReference type="Rhea" id="RHEA:14305"/>
        <dbReference type="Rhea" id="RHEA-COMP:9700"/>
        <dbReference type="Rhea" id="RHEA-COMP:9702"/>
        <dbReference type="ChEBI" id="CHEBI:30616"/>
        <dbReference type="ChEBI" id="CHEBI:33019"/>
        <dbReference type="ChEBI" id="CHEBI:60039"/>
        <dbReference type="ChEBI" id="CHEBI:78442"/>
        <dbReference type="ChEBI" id="CHEBI:78532"/>
        <dbReference type="ChEBI" id="CHEBI:456215"/>
        <dbReference type="EC" id="6.1.1.15"/>
    </reaction>
</comment>
<comment type="subunit">
    <text evidence="1">Homodimer.</text>
</comment>
<comment type="subcellular location">
    <subcellularLocation>
        <location evidence="1">Cytoplasm</location>
    </subcellularLocation>
</comment>
<comment type="domain">
    <text evidence="1">Consists of three domains: the N-terminal catalytic domain, the editing domain and the C-terminal anticodon-binding domain.</text>
</comment>
<comment type="similarity">
    <text evidence="1">Belongs to the class-II aminoacyl-tRNA synthetase family. ProS type 1 subfamily.</text>
</comment>
<protein>
    <recommendedName>
        <fullName evidence="1">Proline--tRNA ligase</fullName>
        <ecNumber evidence="1">6.1.1.15</ecNumber>
    </recommendedName>
    <alternativeName>
        <fullName evidence="1">Prolyl-tRNA synthetase</fullName>
        <shortName evidence="1">ProRS</shortName>
    </alternativeName>
</protein>
<keyword id="KW-0030">Aminoacyl-tRNA synthetase</keyword>
<keyword id="KW-0067">ATP-binding</keyword>
<keyword id="KW-0963">Cytoplasm</keyword>
<keyword id="KW-0436">Ligase</keyword>
<keyword id="KW-0547">Nucleotide-binding</keyword>
<keyword id="KW-0648">Protein biosynthesis</keyword>
<keyword id="KW-1185">Reference proteome</keyword>
<proteinExistence type="inferred from homology"/>
<gene>
    <name evidence="1" type="primary">proS</name>
    <name type="ordered locus">GSU1460</name>
</gene>
<dbReference type="EC" id="6.1.1.15" evidence="1"/>
<dbReference type="EMBL" id="AE017180">
    <property type="protein sequence ID" value="AAR34834.1"/>
    <property type="molecule type" value="Genomic_DNA"/>
</dbReference>
<dbReference type="RefSeq" id="NP_952511.1">
    <property type="nucleotide sequence ID" value="NC_002939.5"/>
</dbReference>
<dbReference type="RefSeq" id="WP_010942106.1">
    <property type="nucleotide sequence ID" value="NC_002939.5"/>
</dbReference>
<dbReference type="SMR" id="Q74D59"/>
<dbReference type="FunCoup" id="Q74D59">
    <property type="interactions" value="541"/>
</dbReference>
<dbReference type="STRING" id="243231.GSU1460"/>
<dbReference type="EnsemblBacteria" id="AAR34834">
    <property type="protein sequence ID" value="AAR34834"/>
    <property type="gene ID" value="GSU1460"/>
</dbReference>
<dbReference type="KEGG" id="gsu:GSU1460"/>
<dbReference type="PATRIC" id="fig|243231.5.peg.1506"/>
<dbReference type="eggNOG" id="COG0442">
    <property type="taxonomic scope" value="Bacteria"/>
</dbReference>
<dbReference type="HOGENOM" id="CLU_016739_0_0_7"/>
<dbReference type="InParanoid" id="Q74D59"/>
<dbReference type="OrthoDB" id="9809052at2"/>
<dbReference type="Proteomes" id="UP000000577">
    <property type="component" value="Chromosome"/>
</dbReference>
<dbReference type="GO" id="GO:0005829">
    <property type="term" value="C:cytosol"/>
    <property type="evidence" value="ECO:0000318"/>
    <property type="project" value="GO_Central"/>
</dbReference>
<dbReference type="GO" id="GO:0002161">
    <property type="term" value="F:aminoacyl-tRNA deacylase activity"/>
    <property type="evidence" value="ECO:0007669"/>
    <property type="project" value="InterPro"/>
</dbReference>
<dbReference type="GO" id="GO:0005524">
    <property type="term" value="F:ATP binding"/>
    <property type="evidence" value="ECO:0007669"/>
    <property type="project" value="UniProtKB-UniRule"/>
</dbReference>
<dbReference type="GO" id="GO:0004827">
    <property type="term" value="F:proline-tRNA ligase activity"/>
    <property type="evidence" value="ECO:0000318"/>
    <property type="project" value="GO_Central"/>
</dbReference>
<dbReference type="GO" id="GO:0006433">
    <property type="term" value="P:prolyl-tRNA aminoacylation"/>
    <property type="evidence" value="ECO:0000318"/>
    <property type="project" value="GO_Central"/>
</dbReference>
<dbReference type="CDD" id="cd04334">
    <property type="entry name" value="ProRS-INS"/>
    <property type="match status" value="1"/>
</dbReference>
<dbReference type="CDD" id="cd00861">
    <property type="entry name" value="ProRS_anticodon_short"/>
    <property type="match status" value="1"/>
</dbReference>
<dbReference type="CDD" id="cd00779">
    <property type="entry name" value="ProRS_core_prok"/>
    <property type="match status" value="1"/>
</dbReference>
<dbReference type="FunFam" id="3.30.930.10:FF:000012">
    <property type="entry name" value="Proline--tRNA ligase"/>
    <property type="match status" value="1"/>
</dbReference>
<dbReference type="FunFam" id="3.30.930.10:FF:000065">
    <property type="entry name" value="Proline--tRNA ligase"/>
    <property type="match status" value="1"/>
</dbReference>
<dbReference type="FunFam" id="3.40.50.800:FF:000011">
    <property type="entry name" value="Proline--tRNA ligase"/>
    <property type="match status" value="1"/>
</dbReference>
<dbReference type="Gene3D" id="3.40.50.800">
    <property type="entry name" value="Anticodon-binding domain"/>
    <property type="match status" value="1"/>
</dbReference>
<dbReference type="Gene3D" id="3.30.930.10">
    <property type="entry name" value="Bira Bifunctional Protein, Domain 2"/>
    <property type="match status" value="2"/>
</dbReference>
<dbReference type="Gene3D" id="3.90.960.10">
    <property type="entry name" value="YbaK/aminoacyl-tRNA synthetase-associated domain"/>
    <property type="match status" value="1"/>
</dbReference>
<dbReference type="HAMAP" id="MF_01569">
    <property type="entry name" value="Pro_tRNA_synth_type1"/>
    <property type="match status" value="1"/>
</dbReference>
<dbReference type="InterPro" id="IPR002314">
    <property type="entry name" value="aa-tRNA-synt_IIb"/>
</dbReference>
<dbReference type="InterPro" id="IPR006195">
    <property type="entry name" value="aa-tRNA-synth_II"/>
</dbReference>
<dbReference type="InterPro" id="IPR045864">
    <property type="entry name" value="aa-tRNA-synth_II/BPL/LPL"/>
</dbReference>
<dbReference type="InterPro" id="IPR004154">
    <property type="entry name" value="Anticodon-bd"/>
</dbReference>
<dbReference type="InterPro" id="IPR036621">
    <property type="entry name" value="Anticodon-bd_dom_sf"/>
</dbReference>
<dbReference type="InterPro" id="IPR002316">
    <property type="entry name" value="Pro-tRNA-ligase_IIa"/>
</dbReference>
<dbReference type="InterPro" id="IPR004500">
    <property type="entry name" value="Pro-tRNA-synth_IIa_bac-type"/>
</dbReference>
<dbReference type="InterPro" id="IPR023717">
    <property type="entry name" value="Pro-tRNA-Synthase_IIa_type1"/>
</dbReference>
<dbReference type="InterPro" id="IPR050062">
    <property type="entry name" value="Pro-tRNA_synthetase"/>
</dbReference>
<dbReference type="InterPro" id="IPR044140">
    <property type="entry name" value="ProRS_anticodon_short"/>
</dbReference>
<dbReference type="InterPro" id="IPR033730">
    <property type="entry name" value="ProRS_core_prok"/>
</dbReference>
<dbReference type="InterPro" id="IPR036754">
    <property type="entry name" value="YbaK/aa-tRNA-synt-asso_dom_sf"/>
</dbReference>
<dbReference type="InterPro" id="IPR007214">
    <property type="entry name" value="YbaK/aa-tRNA-synth-assoc-dom"/>
</dbReference>
<dbReference type="NCBIfam" id="NF006625">
    <property type="entry name" value="PRK09194.1"/>
    <property type="match status" value="1"/>
</dbReference>
<dbReference type="NCBIfam" id="TIGR00409">
    <property type="entry name" value="proS_fam_II"/>
    <property type="match status" value="1"/>
</dbReference>
<dbReference type="PANTHER" id="PTHR42753">
    <property type="entry name" value="MITOCHONDRIAL RIBOSOME PROTEIN L39/PROLYL-TRNA LIGASE FAMILY MEMBER"/>
    <property type="match status" value="1"/>
</dbReference>
<dbReference type="PANTHER" id="PTHR42753:SF2">
    <property type="entry name" value="PROLINE--TRNA LIGASE"/>
    <property type="match status" value="1"/>
</dbReference>
<dbReference type="Pfam" id="PF03129">
    <property type="entry name" value="HGTP_anticodon"/>
    <property type="match status" value="1"/>
</dbReference>
<dbReference type="Pfam" id="PF00587">
    <property type="entry name" value="tRNA-synt_2b"/>
    <property type="match status" value="1"/>
</dbReference>
<dbReference type="Pfam" id="PF04073">
    <property type="entry name" value="tRNA_edit"/>
    <property type="match status" value="1"/>
</dbReference>
<dbReference type="PIRSF" id="PIRSF001535">
    <property type="entry name" value="ProRS_1"/>
    <property type="match status" value="1"/>
</dbReference>
<dbReference type="PRINTS" id="PR01046">
    <property type="entry name" value="TRNASYNTHPRO"/>
</dbReference>
<dbReference type="SUPFAM" id="SSF52954">
    <property type="entry name" value="Class II aaRS ABD-related"/>
    <property type="match status" value="1"/>
</dbReference>
<dbReference type="SUPFAM" id="SSF55681">
    <property type="entry name" value="Class II aaRS and biotin synthetases"/>
    <property type="match status" value="1"/>
</dbReference>
<dbReference type="SUPFAM" id="SSF55826">
    <property type="entry name" value="YbaK/ProRS associated domain"/>
    <property type="match status" value="1"/>
</dbReference>
<dbReference type="PROSITE" id="PS50862">
    <property type="entry name" value="AA_TRNA_LIGASE_II"/>
    <property type="match status" value="1"/>
</dbReference>